<accession>Q8KCC7</accession>
<gene>
    <name evidence="1" type="primary">ispE</name>
    <name type="ordered locus">CT1495</name>
</gene>
<name>ISPE_CHLTE</name>
<reference key="1">
    <citation type="journal article" date="2002" name="Proc. Natl. Acad. Sci. U.S.A.">
        <title>The complete genome sequence of Chlorobium tepidum TLS, a photosynthetic, anaerobic, green-sulfur bacterium.</title>
        <authorList>
            <person name="Eisen J.A."/>
            <person name="Nelson K.E."/>
            <person name="Paulsen I.T."/>
            <person name="Heidelberg J.F."/>
            <person name="Wu M."/>
            <person name="Dodson R.J."/>
            <person name="DeBoy R.T."/>
            <person name="Gwinn M.L."/>
            <person name="Nelson W.C."/>
            <person name="Haft D.H."/>
            <person name="Hickey E.K."/>
            <person name="Peterson J.D."/>
            <person name="Durkin A.S."/>
            <person name="Kolonay J.F."/>
            <person name="Yang F."/>
            <person name="Holt I.E."/>
            <person name="Umayam L.A."/>
            <person name="Mason T.M."/>
            <person name="Brenner M."/>
            <person name="Shea T.P."/>
            <person name="Parksey D.S."/>
            <person name="Nierman W.C."/>
            <person name="Feldblyum T.V."/>
            <person name="Hansen C.L."/>
            <person name="Craven M.B."/>
            <person name="Radune D."/>
            <person name="Vamathevan J.J."/>
            <person name="Khouri H.M."/>
            <person name="White O."/>
            <person name="Gruber T.M."/>
            <person name="Ketchum K.A."/>
            <person name="Venter J.C."/>
            <person name="Tettelin H."/>
            <person name="Bryant D.A."/>
            <person name="Fraser C.M."/>
        </authorList>
    </citation>
    <scope>NUCLEOTIDE SEQUENCE [LARGE SCALE GENOMIC DNA]</scope>
    <source>
        <strain>ATCC 49652 / DSM 12025 / NBRC 103806 / TLS</strain>
    </source>
</reference>
<organism>
    <name type="scientific">Chlorobaculum tepidum (strain ATCC 49652 / DSM 12025 / NBRC 103806 / TLS)</name>
    <name type="common">Chlorobium tepidum</name>
    <dbReference type="NCBI Taxonomy" id="194439"/>
    <lineage>
        <taxon>Bacteria</taxon>
        <taxon>Pseudomonadati</taxon>
        <taxon>Chlorobiota</taxon>
        <taxon>Chlorobiia</taxon>
        <taxon>Chlorobiales</taxon>
        <taxon>Chlorobiaceae</taxon>
        <taxon>Chlorobaculum</taxon>
    </lineage>
</organism>
<proteinExistence type="inferred from homology"/>
<feature type="chain" id="PRO_0000189204" description="4-diphosphocytidyl-2-C-methyl-D-erythritol kinase">
    <location>
        <begin position="1"/>
        <end position="286"/>
    </location>
</feature>
<feature type="active site" evidence="1">
    <location>
        <position position="11"/>
    </location>
</feature>
<feature type="active site" evidence="1">
    <location>
        <position position="135"/>
    </location>
</feature>
<feature type="binding site" evidence="1">
    <location>
        <begin position="93"/>
        <end position="103"/>
    </location>
    <ligand>
        <name>ATP</name>
        <dbReference type="ChEBI" id="CHEBI:30616"/>
    </ligand>
</feature>
<protein>
    <recommendedName>
        <fullName evidence="1">4-diphosphocytidyl-2-C-methyl-D-erythritol kinase</fullName>
        <shortName evidence="1">CMK</shortName>
        <ecNumber evidence="1">2.7.1.148</ecNumber>
    </recommendedName>
    <alternativeName>
        <fullName evidence="1">4-(cytidine-5'-diphospho)-2-C-methyl-D-erythritol kinase</fullName>
    </alternativeName>
</protein>
<sequence length="286" mass="31409">MKHFSVKACAKINLGLLITSRRADGYHTLETIFAPIDWFDTLEFTESDAISMECSNLDLLVDDSNLCIRAAKALQEHTGVKRGATIKLLKRVPFGAGLGGGSSDAAATLNALCKLWQIDVPSAELHKLAVKLGADVPYFLEMKGLAYAAGIGEELEDLNLALPWHVVTVFPEVQVPTAWAYKNFHRQFERPVPDLKTLVRRLCHERDISVFGVFENDFASVVFEHYPVVREVRDALAASGAQFVSLSGSGSAVYALYEGRADAVKAAEAMSARFRINMTPAGFRME</sequence>
<evidence type="ECO:0000255" key="1">
    <source>
        <dbReference type="HAMAP-Rule" id="MF_00061"/>
    </source>
</evidence>
<dbReference type="EC" id="2.7.1.148" evidence="1"/>
<dbReference type="EMBL" id="AE006470">
    <property type="protein sequence ID" value="AAM72722.1"/>
    <property type="molecule type" value="Genomic_DNA"/>
</dbReference>
<dbReference type="RefSeq" id="NP_662380.1">
    <property type="nucleotide sequence ID" value="NC_002932.3"/>
</dbReference>
<dbReference type="RefSeq" id="WP_010933161.1">
    <property type="nucleotide sequence ID" value="NC_002932.3"/>
</dbReference>
<dbReference type="SMR" id="Q8KCC7"/>
<dbReference type="STRING" id="194439.CT1495"/>
<dbReference type="EnsemblBacteria" id="AAM72722">
    <property type="protein sequence ID" value="AAM72722"/>
    <property type="gene ID" value="CT1495"/>
</dbReference>
<dbReference type="KEGG" id="cte:CT1495"/>
<dbReference type="PATRIC" id="fig|194439.7.peg.1356"/>
<dbReference type="eggNOG" id="COG1947">
    <property type="taxonomic scope" value="Bacteria"/>
</dbReference>
<dbReference type="HOGENOM" id="CLU_053057_3_0_10"/>
<dbReference type="OrthoDB" id="9809438at2"/>
<dbReference type="UniPathway" id="UPA00056">
    <property type="reaction ID" value="UER00094"/>
</dbReference>
<dbReference type="Proteomes" id="UP000001007">
    <property type="component" value="Chromosome"/>
</dbReference>
<dbReference type="GO" id="GO:0050515">
    <property type="term" value="F:4-(cytidine 5'-diphospho)-2-C-methyl-D-erythritol kinase activity"/>
    <property type="evidence" value="ECO:0007669"/>
    <property type="project" value="UniProtKB-UniRule"/>
</dbReference>
<dbReference type="GO" id="GO:0005524">
    <property type="term" value="F:ATP binding"/>
    <property type="evidence" value="ECO:0007669"/>
    <property type="project" value="UniProtKB-UniRule"/>
</dbReference>
<dbReference type="GO" id="GO:0019288">
    <property type="term" value="P:isopentenyl diphosphate biosynthetic process, methylerythritol 4-phosphate pathway"/>
    <property type="evidence" value="ECO:0007669"/>
    <property type="project" value="UniProtKB-UniRule"/>
</dbReference>
<dbReference type="GO" id="GO:0016114">
    <property type="term" value="P:terpenoid biosynthetic process"/>
    <property type="evidence" value="ECO:0007669"/>
    <property type="project" value="InterPro"/>
</dbReference>
<dbReference type="Gene3D" id="3.30.230.10">
    <property type="match status" value="1"/>
</dbReference>
<dbReference type="Gene3D" id="3.30.70.890">
    <property type="entry name" value="GHMP kinase, C-terminal domain"/>
    <property type="match status" value="1"/>
</dbReference>
<dbReference type="HAMAP" id="MF_00061">
    <property type="entry name" value="IspE"/>
    <property type="match status" value="1"/>
</dbReference>
<dbReference type="InterPro" id="IPR013750">
    <property type="entry name" value="GHMP_kinase_C_dom"/>
</dbReference>
<dbReference type="InterPro" id="IPR036554">
    <property type="entry name" value="GHMP_kinase_C_sf"/>
</dbReference>
<dbReference type="InterPro" id="IPR006204">
    <property type="entry name" value="GHMP_kinase_N_dom"/>
</dbReference>
<dbReference type="InterPro" id="IPR004424">
    <property type="entry name" value="IspE"/>
</dbReference>
<dbReference type="InterPro" id="IPR020568">
    <property type="entry name" value="Ribosomal_Su5_D2-typ_SF"/>
</dbReference>
<dbReference type="InterPro" id="IPR014721">
    <property type="entry name" value="Ribsml_uS5_D2-typ_fold_subgr"/>
</dbReference>
<dbReference type="NCBIfam" id="TIGR00154">
    <property type="entry name" value="ispE"/>
    <property type="match status" value="1"/>
</dbReference>
<dbReference type="PANTHER" id="PTHR43527">
    <property type="entry name" value="4-DIPHOSPHOCYTIDYL-2-C-METHYL-D-ERYTHRITOL KINASE, CHLOROPLASTIC"/>
    <property type="match status" value="1"/>
</dbReference>
<dbReference type="PANTHER" id="PTHR43527:SF2">
    <property type="entry name" value="4-DIPHOSPHOCYTIDYL-2-C-METHYL-D-ERYTHRITOL KINASE, CHLOROPLASTIC"/>
    <property type="match status" value="1"/>
</dbReference>
<dbReference type="Pfam" id="PF08544">
    <property type="entry name" value="GHMP_kinases_C"/>
    <property type="match status" value="1"/>
</dbReference>
<dbReference type="Pfam" id="PF00288">
    <property type="entry name" value="GHMP_kinases_N"/>
    <property type="match status" value="1"/>
</dbReference>
<dbReference type="PIRSF" id="PIRSF010376">
    <property type="entry name" value="IspE"/>
    <property type="match status" value="1"/>
</dbReference>
<dbReference type="SUPFAM" id="SSF55060">
    <property type="entry name" value="GHMP Kinase, C-terminal domain"/>
    <property type="match status" value="1"/>
</dbReference>
<dbReference type="SUPFAM" id="SSF54211">
    <property type="entry name" value="Ribosomal protein S5 domain 2-like"/>
    <property type="match status" value="1"/>
</dbReference>
<keyword id="KW-0067">ATP-binding</keyword>
<keyword id="KW-0414">Isoprene biosynthesis</keyword>
<keyword id="KW-0418">Kinase</keyword>
<keyword id="KW-0547">Nucleotide-binding</keyword>
<keyword id="KW-1185">Reference proteome</keyword>
<keyword id="KW-0808">Transferase</keyword>
<comment type="function">
    <text evidence="1">Catalyzes the phosphorylation of the position 2 hydroxy group of 4-diphosphocytidyl-2C-methyl-D-erythritol.</text>
</comment>
<comment type="catalytic activity">
    <reaction evidence="1">
        <text>4-CDP-2-C-methyl-D-erythritol + ATP = 4-CDP-2-C-methyl-D-erythritol 2-phosphate + ADP + H(+)</text>
        <dbReference type="Rhea" id="RHEA:18437"/>
        <dbReference type="ChEBI" id="CHEBI:15378"/>
        <dbReference type="ChEBI" id="CHEBI:30616"/>
        <dbReference type="ChEBI" id="CHEBI:57823"/>
        <dbReference type="ChEBI" id="CHEBI:57919"/>
        <dbReference type="ChEBI" id="CHEBI:456216"/>
        <dbReference type="EC" id="2.7.1.148"/>
    </reaction>
</comment>
<comment type="pathway">
    <text evidence="1">Isoprenoid biosynthesis; isopentenyl diphosphate biosynthesis via DXP pathway; isopentenyl diphosphate from 1-deoxy-D-xylulose 5-phosphate: step 3/6.</text>
</comment>
<comment type="similarity">
    <text evidence="1">Belongs to the GHMP kinase family. IspE subfamily.</text>
</comment>